<protein>
    <recommendedName>
        <fullName evidence="1">Small ribosomal subunit protein uS5</fullName>
    </recommendedName>
    <alternativeName>
        <fullName evidence="2">30S ribosomal protein S5</fullName>
    </alternativeName>
</protein>
<keyword id="KW-0687">Ribonucleoprotein</keyword>
<keyword id="KW-0689">Ribosomal protein</keyword>
<keyword id="KW-0694">RNA-binding</keyword>
<keyword id="KW-0699">rRNA-binding</keyword>
<name>RS5_VIBC3</name>
<proteinExistence type="inferred from homology"/>
<evidence type="ECO:0000255" key="1">
    <source>
        <dbReference type="HAMAP-Rule" id="MF_01307"/>
    </source>
</evidence>
<evidence type="ECO:0000305" key="2"/>
<feature type="chain" id="PRO_0000323226" description="Small ribosomal subunit protein uS5">
    <location>
        <begin position="1"/>
        <end position="167"/>
    </location>
</feature>
<feature type="domain" description="S5 DRBM" evidence="1">
    <location>
        <begin position="12"/>
        <end position="75"/>
    </location>
</feature>
<accession>A5F563</accession>
<accession>C3LXH8</accession>
<gene>
    <name evidence="1" type="primary">rpsE</name>
    <name type="ordered locus">VC0395_A2157</name>
    <name type="ordered locus">VC395_2692</name>
</gene>
<sequence length="167" mass="17576">MAKEQQVQANDLQEKLIAVNRVSKTVKGGRIMSFTALTVVGDGNGRVGFGYGKAREVPAAIQKAMEKARRSMVTIALNEGTLHHPVKGRHSGSKVYMQPAAEGTGVIAGGAMRAVLEVAGVHNVLSKAYGSTNPINIVRATIDALVDVKSPEMVAAKRGLTVEAISE</sequence>
<comment type="function">
    <text evidence="1">With S4 and S12 plays an important role in translational accuracy.</text>
</comment>
<comment type="function">
    <text evidence="1">Located at the back of the 30S subunit body where it stabilizes the conformation of the head with respect to the body.</text>
</comment>
<comment type="subunit">
    <text evidence="1">Part of the 30S ribosomal subunit. Contacts proteins S4 and S8.</text>
</comment>
<comment type="domain">
    <text>The N-terminal domain interacts with the head of the 30S subunit; the C-terminal domain interacts with the body and contacts protein S4. The interaction surface between S4 and S5 is involved in control of translational fidelity.</text>
</comment>
<comment type="similarity">
    <text evidence="1">Belongs to the universal ribosomal protein uS5 family.</text>
</comment>
<dbReference type="EMBL" id="CP000627">
    <property type="protein sequence ID" value="ABQ21688.1"/>
    <property type="molecule type" value="Genomic_DNA"/>
</dbReference>
<dbReference type="EMBL" id="CP001235">
    <property type="protein sequence ID" value="ACP10678.1"/>
    <property type="molecule type" value="Genomic_DNA"/>
</dbReference>
<dbReference type="RefSeq" id="WP_001040926.1">
    <property type="nucleotide sequence ID" value="NZ_JAACZH010000007.1"/>
</dbReference>
<dbReference type="SMR" id="A5F563"/>
<dbReference type="GeneID" id="94012769"/>
<dbReference type="KEGG" id="vco:VC0395_A2157"/>
<dbReference type="KEGG" id="vcr:VC395_2692"/>
<dbReference type="PATRIC" id="fig|345073.21.peg.2592"/>
<dbReference type="eggNOG" id="COG0098">
    <property type="taxonomic scope" value="Bacteria"/>
</dbReference>
<dbReference type="HOGENOM" id="CLU_065898_2_2_6"/>
<dbReference type="OrthoDB" id="9809045at2"/>
<dbReference type="Proteomes" id="UP000000249">
    <property type="component" value="Chromosome 2"/>
</dbReference>
<dbReference type="GO" id="GO:0015935">
    <property type="term" value="C:small ribosomal subunit"/>
    <property type="evidence" value="ECO:0007669"/>
    <property type="project" value="InterPro"/>
</dbReference>
<dbReference type="GO" id="GO:0019843">
    <property type="term" value="F:rRNA binding"/>
    <property type="evidence" value="ECO:0007669"/>
    <property type="project" value="UniProtKB-UniRule"/>
</dbReference>
<dbReference type="GO" id="GO:0003735">
    <property type="term" value="F:structural constituent of ribosome"/>
    <property type="evidence" value="ECO:0007669"/>
    <property type="project" value="InterPro"/>
</dbReference>
<dbReference type="GO" id="GO:0006412">
    <property type="term" value="P:translation"/>
    <property type="evidence" value="ECO:0007669"/>
    <property type="project" value="UniProtKB-UniRule"/>
</dbReference>
<dbReference type="FunFam" id="3.30.160.20:FF:000001">
    <property type="entry name" value="30S ribosomal protein S5"/>
    <property type="match status" value="1"/>
</dbReference>
<dbReference type="FunFam" id="3.30.230.10:FF:000002">
    <property type="entry name" value="30S ribosomal protein S5"/>
    <property type="match status" value="1"/>
</dbReference>
<dbReference type="Gene3D" id="3.30.160.20">
    <property type="match status" value="1"/>
</dbReference>
<dbReference type="Gene3D" id="3.30.230.10">
    <property type="match status" value="1"/>
</dbReference>
<dbReference type="HAMAP" id="MF_01307_B">
    <property type="entry name" value="Ribosomal_uS5_B"/>
    <property type="match status" value="1"/>
</dbReference>
<dbReference type="InterPro" id="IPR020568">
    <property type="entry name" value="Ribosomal_Su5_D2-typ_SF"/>
</dbReference>
<dbReference type="InterPro" id="IPR000851">
    <property type="entry name" value="Ribosomal_uS5"/>
</dbReference>
<dbReference type="InterPro" id="IPR005712">
    <property type="entry name" value="Ribosomal_uS5_bac-type"/>
</dbReference>
<dbReference type="InterPro" id="IPR005324">
    <property type="entry name" value="Ribosomal_uS5_C"/>
</dbReference>
<dbReference type="InterPro" id="IPR013810">
    <property type="entry name" value="Ribosomal_uS5_N"/>
</dbReference>
<dbReference type="InterPro" id="IPR018192">
    <property type="entry name" value="Ribosomal_uS5_N_CS"/>
</dbReference>
<dbReference type="InterPro" id="IPR014721">
    <property type="entry name" value="Ribsml_uS5_D2-typ_fold_subgr"/>
</dbReference>
<dbReference type="NCBIfam" id="TIGR01021">
    <property type="entry name" value="rpsE_bact"/>
    <property type="match status" value="1"/>
</dbReference>
<dbReference type="PANTHER" id="PTHR48277">
    <property type="entry name" value="MITOCHONDRIAL RIBOSOMAL PROTEIN S5"/>
    <property type="match status" value="1"/>
</dbReference>
<dbReference type="PANTHER" id="PTHR48277:SF1">
    <property type="entry name" value="MITOCHONDRIAL RIBOSOMAL PROTEIN S5"/>
    <property type="match status" value="1"/>
</dbReference>
<dbReference type="Pfam" id="PF00333">
    <property type="entry name" value="Ribosomal_S5"/>
    <property type="match status" value="1"/>
</dbReference>
<dbReference type="Pfam" id="PF03719">
    <property type="entry name" value="Ribosomal_S5_C"/>
    <property type="match status" value="1"/>
</dbReference>
<dbReference type="SUPFAM" id="SSF54768">
    <property type="entry name" value="dsRNA-binding domain-like"/>
    <property type="match status" value="1"/>
</dbReference>
<dbReference type="SUPFAM" id="SSF54211">
    <property type="entry name" value="Ribosomal protein S5 domain 2-like"/>
    <property type="match status" value="1"/>
</dbReference>
<dbReference type="PROSITE" id="PS00585">
    <property type="entry name" value="RIBOSOMAL_S5"/>
    <property type="match status" value="1"/>
</dbReference>
<dbReference type="PROSITE" id="PS50881">
    <property type="entry name" value="S5_DSRBD"/>
    <property type="match status" value="1"/>
</dbReference>
<organism>
    <name type="scientific">Vibrio cholerae serotype O1 (strain ATCC 39541 / Classical Ogawa 395 / O395)</name>
    <dbReference type="NCBI Taxonomy" id="345073"/>
    <lineage>
        <taxon>Bacteria</taxon>
        <taxon>Pseudomonadati</taxon>
        <taxon>Pseudomonadota</taxon>
        <taxon>Gammaproteobacteria</taxon>
        <taxon>Vibrionales</taxon>
        <taxon>Vibrionaceae</taxon>
        <taxon>Vibrio</taxon>
    </lineage>
</organism>
<reference key="1">
    <citation type="submission" date="2007-03" db="EMBL/GenBank/DDBJ databases">
        <authorList>
            <person name="Heidelberg J."/>
        </authorList>
    </citation>
    <scope>NUCLEOTIDE SEQUENCE [LARGE SCALE GENOMIC DNA]</scope>
    <source>
        <strain>ATCC 39541 / Classical Ogawa 395 / O395</strain>
    </source>
</reference>
<reference key="2">
    <citation type="journal article" date="2008" name="PLoS ONE">
        <title>A recalibrated molecular clock and independent origins for the cholera pandemic clones.</title>
        <authorList>
            <person name="Feng L."/>
            <person name="Reeves P.R."/>
            <person name="Lan R."/>
            <person name="Ren Y."/>
            <person name="Gao C."/>
            <person name="Zhou Z."/>
            <person name="Ren Y."/>
            <person name="Cheng J."/>
            <person name="Wang W."/>
            <person name="Wang J."/>
            <person name="Qian W."/>
            <person name="Li D."/>
            <person name="Wang L."/>
        </authorList>
    </citation>
    <scope>NUCLEOTIDE SEQUENCE [LARGE SCALE GENOMIC DNA]</scope>
    <source>
        <strain>ATCC 39541 / Classical Ogawa 395 / O395</strain>
    </source>
</reference>